<comment type="function">
    <text evidence="1">Catalyzes the attachment of alanine to tRNA(Ala) in a two-step reaction: alanine is first activated by ATP to form Ala-AMP and then transferred to the acceptor end of tRNA(Ala). Also edits incorrectly charged Ser-tRNA(Ala) and Gly-tRNA(Ala) via its editing domain.</text>
</comment>
<comment type="catalytic activity">
    <reaction evidence="1">
        <text>tRNA(Ala) + L-alanine + ATP = L-alanyl-tRNA(Ala) + AMP + diphosphate</text>
        <dbReference type="Rhea" id="RHEA:12540"/>
        <dbReference type="Rhea" id="RHEA-COMP:9657"/>
        <dbReference type="Rhea" id="RHEA-COMP:9923"/>
        <dbReference type="ChEBI" id="CHEBI:30616"/>
        <dbReference type="ChEBI" id="CHEBI:33019"/>
        <dbReference type="ChEBI" id="CHEBI:57972"/>
        <dbReference type="ChEBI" id="CHEBI:78442"/>
        <dbReference type="ChEBI" id="CHEBI:78497"/>
        <dbReference type="ChEBI" id="CHEBI:456215"/>
        <dbReference type="EC" id="6.1.1.7"/>
    </reaction>
</comment>
<comment type="cofactor">
    <cofactor evidence="1">
        <name>Zn(2+)</name>
        <dbReference type="ChEBI" id="CHEBI:29105"/>
    </cofactor>
    <text evidence="1">Binds 1 zinc ion per subunit.</text>
</comment>
<comment type="subcellular location">
    <subcellularLocation>
        <location evidence="1">Cytoplasm</location>
    </subcellularLocation>
</comment>
<comment type="domain">
    <text evidence="1">Consists of three domains; the N-terminal catalytic domain, the editing domain and the C-terminal C-Ala domain. The editing domain removes incorrectly charged amino acids, while the C-Ala domain, along with tRNA(Ala), serves as a bridge to cooperatively bring together the editing and aminoacylation centers thus stimulating deacylation of misacylated tRNAs.</text>
</comment>
<comment type="similarity">
    <text evidence="1">Belongs to the class-II aminoacyl-tRNA synthetase family.</text>
</comment>
<gene>
    <name evidence="1" type="primary">alaS</name>
    <name type="ordered locus">RPB_3737</name>
</gene>
<proteinExistence type="inferred from homology"/>
<reference key="1">
    <citation type="submission" date="2006-01" db="EMBL/GenBank/DDBJ databases">
        <title>Complete sequence of Rhodopseudomonas palustris HaA2.</title>
        <authorList>
            <consortium name="US DOE Joint Genome Institute"/>
            <person name="Copeland A."/>
            <person name="Lucas S."/>
            <person name="Lapidus A."/>
            <person name="Barry K."/>
            <person name="Detter J.C."/>
            <person name="Glavina T."/>
            <person name="Hammon N."/>
            <person name="Israni S."/>
            <person name="Pitluck S."/>
            <person name="Chain P."/>
            <person name="Malfatti S."/>
            <person name="Shin M."/>
            <person name="Vergez L."/>
            <person name="Schmutz J."/>
            <person name="Larimer F."/>
            <person name="Land M."/>
            <person name="Hauser L."/>
            <person name="Pelletier D.A."/>
            <person name="Kyrpides N."/>
            <person name="Anderson I."/>
            <person name="Oda Y."/>
            <person name="Harwood C.S."/>
            <person name="Richardson P."/>
        </authorList>
    </citation>
    <scope>NUCLEOTIDE SEQUENCE [LARGE SCALE GENOMIC DNA]</scope>
    <source>
        <strain>HaA2</strain>
    </source>
</reference>
<feature type="chain" id="PRO_0000347760" description="Alanine--tRNA ligase">
    <location>
        <begin position="1"/>
        <end position="891"/>
    </location>
</feature>
<feature type="binding site" evidence="1">
    <location>
        <position position="564"/>
    </location>
    <ligand>
        <name>Zn(2+)</name>
        <dbReference type="ChEBI" id="CHEBI:29105"/>
    </ligand>
</feature>
<feature type="binding site" evidence="1">
    <location>
        <position position="568"/>
    </location>
    <ligand>
        <name>Zn(2+)</name>
        <dbReference type="ChEBI" id="CHEBI:29105"/>
    </ligand>
</feature>
<feature type="binding site" evidence="1">
    <location>
        <position position="677"/>
    </location>
    <ligand>
        <name>Zn(2+)</name>
        <dbReference type="ChEBI" id="CHEBI:29105"/>
    </ligand>
</feature>
<feature type="binding site" evidence="1">
    <location>
        <position position="681"/>
    </location>
    <ligand>
        <name>Zn(2+)</name>
        <dbReference type="ChEBI" id="CHEBI:29105"/>
    </ligand>
</feature>
<dbReference type="EC" id="6.1.1.7" evidence="1"/>
<dbReference type="EMBL" id="CP000250">
    <property type="protein sequence ID" value="ABD08431.1"/>
    <property type="molecule type" value="Genomic_DNA"/>
</dbReference>
<dbReference type="RefSeq" id="WP_011442615.1">
    <property type="nucleotide sequence ID" value="NC_007778.1"/>
</dbReference>
<dbReference type="SMR" id="Q2ITM9"/>
<dbReference type="STRING" id="316058.RPB_3737"/>
<dbReference type="KEGG" id="rpb:RPB_3737"/>
<dbReference type="eggNOG" id="COG0013">
    <property type="taxonomic scope" value="Bacteria"/>
</dbReference>
<dbReference type="HOGENOM" id="CLU_004485_1_1_5"/>
<dbReference type="OrthoDB" id="9803884at2"/>
<dbReference type="Proteomes" id="UP000008809">
    <property type="component" value="Chromosome"/>
</dbReference>
<dbReference type="GO" id="GO:0005829">
    <property type="term" value="C:cytosol"/>
    <property type="evidence" value="ECO:0007669"/>
    <property type="project" value="TreeGrafter"/>
</dbReference>
<dbReference type="GO" id="GO:0004813">
    <property type="term" value="F:alanine-tRNA ligase activity"/>
    <property type="evidence" value="ECO:0007669"/>
    <property type="project" value="UniProtKB-UniRule"/>
</dbReference>
<dbReference type="GO" id="GO:0002161">
    <property type="term" value="F:aminoacyl-tRNA deacylase activity"/>
    <property type="evidence" value="ECO:0007669"/>
    <property type="project" value="TreeGrafter"/>
</dbReference>
<dbReference type="GO" id="GO:0005524">
    <property type="term" value="F:ATP binding"/>
    <property type="evidence" value="ECO:0007669"/>
    <property type="project" value="UniProtKB-UniRule"/>
</dbReference>
<dbReference type="GO" id="GO:0000049">
    <property type="term" value="F:tRNA binding"/>
    <property type="evidence" value="ECO:0007669"/>
    <property type="project" value="UniProtKB-KW"/>
</dbReference>
<dbReference type="GO" id="GO:0008270">
    <property type="term" value="F:zinc ion binding"/>
    <property type="evidence" value="ECO:0007669"/>
    <property type="project" value="UniProtKB-UniRule"/>
</dbReference>
<dbReference type="GO" id="GO:0006419">
    <property type="term" value="P:alanyl-tRNA aminoacylation"/>
    <property type="evidence" value="ECO:0007669"/>
    <property type="project" value="UniProtKB-UniRule"/>
</dbReference>
<dbReference type="GO" id="GO:0045892">
    <property type="term" value="P:negative regulation of DNA-templated transcription"/>
    <property type="evidence" value="ECO:0007669"/>
    <property type="project" value="TreeGrafter"/>
</dbReference>
<dbReference type="CDD" id="cd00673">
    <property type="entry name" value="AlaRS_core"/>
    <property type="match status" value="1"/>
</dbReference>
<dbReference type="FunFam" id="2.40.30.130:FF:000001">
    <property type="entry name" value="Alanine--tRNA ligase"/>
    <property type="match status" value="1"/>
</dbReference>
<dbReference type="FunFam" id="3.10.310.40:FF:000001">
    <property type="entry name" value="Alanine--tRNA ligase"/>
    <property type="match status" value="1"/>
</dbReference>
<dbReference type="FunFam" id="3.30.54.20:FF:000001">
    <property type="entry name" value="Alanine--tRNA ligase"/>
    <property type="match status" value="1"/>
</dbReference>
<dbReference type="FunFam" id="3.30.930.10:FF:000004">
    <property type="entry name" value="Alanine--tRNA ligase"/>
    <property type="match status" value="1"/>
</dbReference>
<dbReference type="FunFam" id="3.30.980.10:FF:000004">
    <property type="entry name" value="Alanine--tRNA ligase, cytoplasmic"/>
    <property type="match status" value="1"/>
</dbReference>
<dbReference type="Gene3D" id="2.40.30.130">
    <property type="match status" value="1"/>
</dbReference>
<dbReference type="Gene3D" id="3.10.310.40">
    <property type="match status" value="1"/>
</dbReference>
<dbReference type="Gene3D" id="3.30.54.20">
    <property type="match status" value="1"/>
</dbReference>
<dbReference type="Gene3D" id="6.10.250.550">
    <property type="match status" value="1"/>
</dbReference>
<dbReference type="Gene3D" id="3.30.930.10">
    <property type="entry name" value="Bira Bifunctional Protein, Domain 2"/>
    <property type="match status" value="1"/>
</dbReference>
<dbReference type="Gene3D" id="3.30.980.10">
    <property type="entry name" value="Threonyl-trna Synthetase, Chain A, domain 2"/>
    <property type="match status" value="1"/>
</dbReference>
<dbReference type="HAMAP" id="MF_00036_B">
    <property type="entry name" value="Ala_tRNA_synth_B"/>
    <property type="match status" value="1"/>
</dbReference>
<dbReference type="InterPro" id="IPR045864">
    <property type="entry name" value="aa-tRNA-synth_II/BPL/LPL"/>
</dbReference>
<dbReference type="InterPro" id="IPR002318">
    <property type="entry name" value="Ala-tRNA-lgiase_IIc"/>
</dbReference>
<dbReference type="InterPro" id="IPR018162">
    <property type="entry name" value="Ala-tRNA-ligase_IIc_anticod-bd"/>
</dbReference>
<dbReference type="InterPro" id="IPR018165">
    <property type="entry name" value="Ala-tRNA-synth_IIc_core"/>
</dbReference>
<dbReference type="InterPro" id="IPR018164">
    <property type="entry name" value="Ala-tRNA-synth_IIc_N"/>
</dbReference>
<dbReference type="InterPro" id="IPR050058">
    <property type="entry name" value="Ala-tRNA_ligase"/>
</dbReference>
<dbReference type="InterPro" id="IPR023033">
    <property type="entry name" value="Ala_tRNA_ligase_euk/bac"/>
</dbReference>
<dbReference type="InterPro" id="IPR003156">
    <property type="entry name" value="DHHA1_dom"/>
</dbReference>
<dbReference type="InterPro" id="IPR018163">
    <property type="entry name" value="Thr/Ala-tRNA-synth_IIc_edit"/>
</dbReference>
<dbReference type="InterPro" id="IPR009000">
    <property type="entry name" value="Transl_B-barrel_sf"/>
</dbReference>
<dbReference type="InterPro" id="IPR012947">
    <property type="entry name" value="tRNA_SAD"/>
</dbReference>
<dbReference type="NCBIfam" id="TIGR00344">
    <property type="entry name" value="alaS"/>
    <property type="match status" value="1"/>
</dbReference>
<dbReference type="PANTHER" id="PTHR11777:SF9">
    <property type="entry name" value="ALANINE--TRNA LIGASE, CYTOPLASMIC"/>
    <property type="match status" value="1"/>
</dbReference>
<dbReference type="PANTHER" id="PTHR11777">
    <property type="entry name" value="ALANYL-TRNA SYNTHETASE"/>
    <property type="match status" value="1"/>
</dbReference>
<dbReference type="Pfam" id="PF02272">
    <property type="entry name" value="DHHA1"/>
    <property type="match status" value="1"/>
</dbReference>
<dbReference type="Pfam" id="PF01411">
    <property type="entry name" value="tRNA-synt_2c"/>
    <property type="match status" value="1"/>
</dbReference>
<dbReference type="Pfam" id="PF07973">
    <property type="entry name" value="tRNA_SAD"/>
    <property type="match status" value="1"/>
</dbReference>
<dbReference type="PRINTS" id="PR00980">
    <property type="entry name" value="TRNASYNTHALA"/>
</dbReference>
<dbReference type="SMART" id="SM00863">
    <property type="entry name" value="tRNA_SAD"/>
    <property type="match status" value="1"/>
</dbReference>
<dbReference type="SUPFAM" id="SSF55681">
    <property type="entry name" value="Class II aaRS and biotin synthetases"/>
    <property type="match status" value="1"/>
</dbReference>
<dbReference type="SUPFAM" id="SSF101353">
    <property type="entry name" value="Putative anticodon-binding domain of alanyl-tRNA synthetase (AlaRS)"/>
    <property type="match status" value="1"/>
</dbReference>
<dbReference type="SUPFAM" id="SSF55186">
    <property type="entry name" value="ThrRS/AlaRS common domain"/>
    <property type="match status" value="1"/>
</dbReference>
<dbReference type="SUPFAM" id="SSF50447">
    <property type="entry name" value="Translation proteins"/>
    <property type="match status" value="1"/>
</dbReference>
<dbReference type="PROSITE" id="PS50860">
    <property type="entry name" value="AA_TRNA_LIGASE_II_ALA"/>
    <property type="match status" value="1"/>
</dbReference>
<protein>
    <recommendedName>
        <fullName evidence="1">Alanine--tRNA ligase</fullName>
        <ecNumber evidence="1">6.1.1.7</ecNumber>
    </recommendedName>
    <alternativeName>
        <fullName evidence="1">Alanyl-tRNA synthetase</fullName>
        <shortName evidence="1">AlaRS</shortName>
    </alternativeName>
</protein>
<keyword id="KW-0030">Aminoacyl-tRNA synthetase</keyword>
<keyword id="KW-0067">ATP-binding</keyword>
<keyword id="KW-0963">Cytoplasm</keyword>
<keyword id="KW-0436">Ligase</keyword>
<keyword id="KW-0479">Metal-binding</keyword>
<keyword id="KW-0547">Nucleotide-binding</keyword>
<keyword id="KW-0648">Protein biosynthesis</keyword>
<keyword id="KW-1185">Reference proteome</keyword>
<keyword id="KW-0694">RNA-binding</keyword>
<keyword id="KW-0820">tRNA-binding</keyword>
<keyword id="KW-0862">Zinc</keyword>
<organism>
    <name type="scientific">Rhodopseudomonas palustris (strain HaA2)</name>
    <dbReference type="NCBI Taxonomy" id="316058"/>
    <lineage>
        <taxon>Bacteria</taxon>
        <taxon>Pseudomonadati</taxon>
        <taxon>Pseudomonadota</taxon>
        <taxon>Alphaproteobacteria</taxon>
        <taxon>Hyphomicrobiales</taxon>
        <taxon>Nitrobacteraceae</taxon>
        <taxon>Rhodopseudomonas</taxon>
    </lineage>
</organism>
<accession>Q2ITM9</accession>
<name>SYA_RHOP2</name>
<sequence>MSGVNDIRSAFLNYFAKNGHDIVPSSPLVPRNDPTLMFTNAGMVQFKNVFTGLEKRPYQRATTSQKCVRAGGKHNDLDNVGYTARHLTFFEMLGNFSFGDYFKERAIELAWNLITKEYGLKKDKLLVTVYHTDDEAASYWKKIAGFSDDRIIRIPTSDNFWAMGDTGPCGPCSEIFIDQGEHIFGGPPGSPEEDGDRFLEFWNLVFMQYEQVTKDERLPLPRPSIDTGMGLERMANILQGVDSVFETDLFRSLIDATSSALGRGPGEEDAASFRVIADHLRSSSFLIADGVLPSNEGRGYVLRRIMRRAMRHAQLLGASEPLMWRLVWALVREMGQAYPELVRAEAMIEETMRLEETRFRKTLDRGLAILDEKSASLKKGDMFDGDTAFTLYDTYGFPLDLTQDALRNRGISVDIASFTDAMDRQRAKARASWAGSGEAATETVWFGLREKLGATEFLGYDTETAEGVVTALVADGKEVDALKAGDSGAIVLNQTPFYAESGGQVGDTGVLSGDGVRFRVTDTLKKAGDLFVHFGTVEEGAIKRDAALQLDVDHARRSSIRANHSATHLLHEALRQVLGDHIAQKGSMVAPDRLRFDFVHQKPITPDELRRVEDIANDIVLENDEVTTRLMAVDDAREAGARALFGEKYGDEVRVVSMGKTARDSGSNALGWSVELCGGTHVKRTGDIGLVSITGESAVASGVRRIEALTGRYARQSANAAINTAKQAAAELRTTVDDMPARIAALMEERKKLERELSDARKKLAMGGGGAAGAADGGADVREVGGVKLMARAVEGIEIKDLKSLVDQGKKQLGSGVIALVATSEDGKGSIVVGVTPDLVARFSAVDLVRTASVVLGGKGGGGKPDMAQAGGPDGSKAQAALDAIAAAIGG</sequence>
<evidence type="ECO:0000255" key="1">
    <source>
        <dbReference type="HAMAP-Rule" id="MF_00036"/>
    </source>
</evidence>